<protein>
    <recommendedName>
        <fullName>Heme oxygenase 2</fullName>
        <shortName>HO-2</shortName>
        <ecNumber evidence="2">1.14.14.18</ecNumber>
    </recommendedName>
</protein>
<gene>
    <name type="primary">HMOX2</name>
</gene>
<organism>
    <name type="scientific">Oryctolagus cuniculus</name>
    <name type="common">Rabbit</name>
    <dbReference type="NCBI Taxonomy" id="9986"/>
    <lineage>
        <taxon>Eukaryota</taxon>
        <taxon>Metazoa</taxon>
        <taxon>Chordata</taxon>
        <taxon>Craniata</taxon>
        <taxon>Vertebrata</taxon>
        <taxon>Euteleostomi</taxon>
        <taxon>Mammalia</taxon>
        <taxon>Eutheria</taxon>
        <taxon>Euarchontoglires</taxon>
        <taxon>Glires</taxon>
        <taxon>Lagomorpha</taxon>
        <taxon>Leporidae</taxon>
        <taxon>Oryctolagus</taxon>
    </lineage>
</organism>
<name>HMOX2_RABIT</name>
<dbReference type="EC" id="1.14.14.18" evidence="2"/>
<dbReference type="EMBL" id="S61699">
    <property type="protein sequence ID" value="AAB20093.1"/>
    <property type="molecule type" value="mRNA"/>
</dbReference>
<dbReference type="PIR" id="S18387">
    <property type="entry name" value="S18387"/>
</dbReference>
<dbReference type="RefSeq" id="NP_001076216.1">
    <property type="nucleotide sequence ID" value="NM_001082747.1"/>
</dbReference>
<dbReference type="SMR" id="P43242"/>
<dbReference type="FunCoup" id="P43242">
    <property type="interactions" value="110"/>
</dbReference>
<dbReference type="STRING" id="9986.ENSOCUP00000044148"/>
<dbReference type="PaxDb" id="9986-ENSOCUP00000005212"/>
<dbReference type="Ensembl" id="ENSOCUT00000006018.3">
    <property type="protein sequence ID" value="ENSOCUP00000005212.3"/>
    <property type="gene ID" value="ENSOCUG00000006018.3"/>
</dbReference>
<dbReference type="GeneID" id="100009523"/>
<dbReference type="KEGG" id="ocu:100009523"/>
<dbReference type="CTD" id="3163"/>
<dbReference type="eggNOG" id="KOG4480">
    <property type="taxonomic scope" value="Eukaryota"/>
</dbReference>
<dbReference type="GeneTree" id="ENSGT00390000017673"/>
<dbReference type="InParanoid" id="P43242"/>
<dbReference type="OrthoDB" id="652091at2759"/>
<dbReference type="Proteomes" id="UP000001811">
    <property type="component" value="Unplaced"/>
</dbReference>
<dbReference type="Bgee" id="ENSOCUG00000006018">
    <property type="expression patterns" value="Expressed in testis and 18 other cell types or tissues"/>
</dbReference>
<dbReference type="GO" id="GO:0005783">
    <property type="term" value="C:endoplasmic reticulum"/>
    <property type="evidence" value="ECO:0007669"/>
    <property type="project" value="UniProtKB-SubCell"/>
</dbReference>
<dbReference type="GO" id="GO:0020037">
    <property type="term" value="F:heme binding"/>
    <property type="evidence" value="ECO:0007669"/>
    <property type="project" value="TreeGrafter"/>
</dbReference>
<dbReference type="GO" id="GO:0004392">
    <property type="term" value="F:heme oxygenase (decyclizing) activity"/>
    <property type="evidence" value="ECO:0007669"/>
    <property type="project" value="UniProtKB-EC"/>
</dbReference>
<dbReference type="GO" id="GO:0046872">
    <property type="term" value="F:metal ion binding"/>
    <property type="evidence" value="ECO:0007669"/>
    <property type="project" value="UniProtKB-KW"/>
</dbReference>
<dbReference type="GO" id="GO:0042167">
    <property type="term" value="P:heme catabolic process"/>
    <property type="evidence" value="ECO:0007669"/>
    <property type="project" value="TreeGrafter"/>
</dbReference>
<dbReference type="GO" id="GO:0006788">
    <property type="term" value="P:heme oxidation"/>
    <property type="evidence" value="ECO:0007669"/>
    <property type="project" value="InterPro"/>
</dbReference>
<dbReference type="GO" id="GO:0006979">
    <property type="term" value="P:response to oxidative stress"/>
    <property type="evidence" value="ECO:0007669"/>
    <property type="project" value="TreeGrafter"/>
</dbReference>
<dbReference type="CDD" id="cd19165">
    <property type="entry name" value="HemeO"/>
    <property type="match status" value="1"/>
</dbReference>
<dbReference type="FunFam" id="1.20.910.10:FF:000001">
    <property type="entry name" value="Heme oxygenase 1"/>
    <property type="match status" value="1"/>
</dbReference>
<dbReference type="Gene3D" id="1.20.910.10">
    <property type="entry name" value="Heme oxygenase-like"/>
    <property type="match status" value="1"/>
</dbReference>
<dbReference type="InterPro" id="IPR002051">
    <property type="entry name" value="Haem_Oase"/>
</dbReference>
<dbReference type="InterPro" id="IPR016053">
    <property type="entry name" value="Haem_Oase-like"/>
</dbReference>
<dbReference type="InterPro" id="IPR016084">
    <property type="entry name" value="Haem_Oase-like_multi-hlx"/>
</dbReference>
<dbReference type="InterPro" id="IPR018207">
    <property type="entry name" value="Haem_oxygenase_CS"/>
</dbReference>
<dbReference type="PANTHER" id="PTHR10720">
    <property type="entry name" value="HEME OXYGENASE"/>
    <property type="match status" value="1"/>
</dbReference>
<dbReference type="PANTHER" id="PTHR10720:SF2">
    <property type="entry name" value="HEME OXYGENASE 2"/>
    <property type="match status" value="1"/>
</dbReference>
<dbReference type="Pfam" id="PF01126">
    <property type="entry name" value="Heme_oxygenase"/>
    <property type="match status" value="1"/>
</dbReference>
<dbReference type="PIRSF" id="PIRSF000343">
    <property type="entry name" value="Haem_Oase"/>
    <property type="match status" value="1"/>
</dbReference>
<dbReference type="PRINTS" id="PR00088">
    <property type="entry name" value="HAEMOXYGNASE"/>
</dbReference>
<dbReference type="SUPFAM" id="SSF48613">
    <property type="entry name" value="Heme oxygenase-like"/>
    <property type="match status" value="1"/>
</dbReference>
<dbReference type="PROSITE" id="PS00593">
    <property type="entry name" value="HEME_OXYGENASE"/>
    <property type="match status" value="1"/>
</dbReference>
<sequence length="312" mass="35373">MSAEVETSEGVDEPEEKNFGENHIRMADLSELLKEGTKEAHDRAENTKFVKDFLKGNIKKEIFKLATTALYFTYSALEEEMDRNKDHPAFAPLYFPMELHRKEALTKDMEYFFGENWEEQVQCSEAAQKYVERIHYIGQNEPELLVAHAYTRYMGDLSGGQVLKKVAQRALKLPSTGEGTQFYLFENVDNAQQFKQFYRARMNALDLNLKTKERIVEEANKAFEYNMQIFSELDQAGSAPASETVEDRIPVHDGKGDVRKCPYYAAGQVNGALEGSSCPFRAAMAVLRKPSLQLVLAAAVALAAGLLAWYYM</sequence>
<reference key="1">
    <citation type="journal article" date="1991" name="Arch. Biochem. Biophys.">
        <title>Characterization of a cDNA-encoding rabbit brain heme oxygenase-2 and identification of a conserved domain among mammalian heme oxygenase isozymes: possible heme-binding site?</title>
        <authorList>
            <person name="Rotenberg M.O."/>
            <person name="Maines M.D."/>
        </authorList>
    </citation>
    <scope>NUCLEOTIDE SEQUENCE [MRNA]</scope>
    <source>
        <tissue>Brain</tissue>
    </source>
</reference>
<comment type="function">
    <text>Heme oxygenase cleaves the heme ring at the alpha methene bridge to form biliverdin. Biliverdin is subsequently converted to bilirubin by biliverdin reductase. Under physiological conditions, the activity of heme oxygenase is highest in the spleen, where senescent erythrocytes are sequestrated and destroyed. Heme oxygenase 2 could be implicated in the production of carbon monoxide in brain where it could act as a neurotransmitter.</text>
</comment>
<comment type="catalytic activity">
    <reaction evidence="2">
        <text>heme b + 3 reduced [NADPH--hemoprotein reductase] + 3 O2 = biliverdin IXalpha + CO + Fe(2+) + 3 oxidized [NADPH--hemoprotein reductase] + 3 H2O + H(+)</text>
        <dbReference type="Rhea" id="RHEA:21764"/>
        <dbReference type="Rhea" id="RHEA-COMP:11964"/>
        <dbReference type="Rhea" id="RHEA-COMP:11965"/>
        <dbReference type="ChEBI" id="CHEBI:15377"/>
        <dbReference type="ChEBI" id="CHEBI:15378"/>
        <dbReference type="ChEBI" id="CHEBI:15379"/>
        <dbReference type="ChEBI" id="CHEBI:17245"/>
        <dbReference type="ChEBI" id="CHEBI:29033"/>
        <dbReference type="ChEBI" id="CHEBI:57618"/>
        <dbReference type="ChEBI" id="CHEBI:57991"/>
        <dbReference type="ChEBI" id="CHEBI:58210"/>
        <dbReference type="ChEBI" id="CHEBI:60344"/>
        <dbReference type="EC" id="1.14.14.18"/>
    </reaction>
</comment>
<comment type="subcellular location">
    <subcellularLocation>
        <location>Microsome</location>
    </subcellularLocation>
    <subcellularLocation>
        <location>Endoplasmic reticulum</location>
    </subcellularLocation>
</comment>
<comment type="PTM">
    <text evidence="3">S-nitrosylated by BLVRB.</text>
</comment>
<comment type="similarity">
    <text evidence="4">Belongs to the heme oxygenase family.</text>
</comment>
<feature type="initiator methionine" description="Removed" evidence="3">
    <location>
        <position position="1"/>
    </location>
</feature>
<feature type="chain" id="PRO_0000209693" description="Heme oxygenase 2">
    <location>
        <begin position="2"/>
        <end position="312"/>
    </location>
</feature>
<feature type="repeat" description="HRM 1">
    <location>
        <begin position="260"/>
        <end position="265"/>
    </location>
</feature>
<feature type="repeat" description="HRM 2">
    <location>
        <begin position="277"/>
        <end position="282"/>
    </location>
</feature>
<feature type="binding site" description="axial binding residue" evidence="1">
    <location>
        <position position="41"/>
    </location>
    <ligand>
        <name>heme b</name>
        <dbReference type="ChEBI" id="CHEBI:60344"/>
    </ligand>
    <ligandPart>
        <name>Fe</name>
        <dbReference type="ChEBI" id="CHEBI:18248"/>
    </ligandPart>
</feature>
<feature type="modified residue" description="N-acetylserine" evidence="3">
    <location>
        <position position="2"/>
    </location>
</feature>
<feature type="modified residue" description="Phosphoserine" evidence="3">
    <location>
        <position position="2"/>
    </location>
</feature>
<feature type="modified residue" description="S-nitrosocysteine" evidence="3">
    <location>
        <position position="261"/>
    </location>
</feature>
<feature type="modified residue" description="S-nitrosocysteine" evidence="3">
    <location>
        <position position="278"/>
    </location>
</feature>
<proteinExistence type="evidence at transcript level"/>
<evidence type="ECO:0000250" key="1"/>
<evidence type="ECO:0000250" key="2">
    <source>
        <dbReference type="UniProtKB" id="O48782"/>
    </source>
</evidence>
<evidence type="ECO:0000250" key="3">
    <source>
        <dbReference type="UniProtKB" id="P30519"/>
    </source>
</evidence>
<evidence type="ECO:0000305" key="4"/>
<accession>P43242</accession>
<keyword id="KW-0007">Acetylation</keyword>
<keyword id="KW-0256">Endoplasmic reticulum</keyword>
<keyword id="KW-0349">Heme</keyword>
<keyword id="KW-0408">Iron</keyword>
<keyword id="KW-0479">Metal-binding</keyword>
<keyword id="KW-0492">Microsome</keyword>
<keyword id="KW-0560">Oxidoreductase</keyword>
<keyword id="KW-0597">Phosphoprotein</keyword>
<keyword id="KW-1185">Reference proteome</keyword>
<keyword id="KW-0677">Repeat</keyword>
<keyword id="KW-0702">S-nitrosylation</keyword>